<evidence type="ECO:0000250" key="1"/>
<evidence type="ECO:0000255" key="2">
    <source>
        <dbReference type="PROSITE-ProRule" id="PRU01188"/>
    </source>
</evidence>
<evidence type="ECO:0000256" key="3">
    <source>
        <dbReference type="SAM" id="MobiDB-lite"/>
    </source>
</evidence>
<gene>
    <name type="primary">KRT74</name>
</gene>
<keyword id="KW-0175">Coiled coil</keyword>
<keyword id="KW-0403">Intermediate filament</keyword>
<keyword id="KW-0416">Keratin</keyword>
<keyword id="KW-1185">Reference proteome</keyword>
<proteinExistence type="evidence at transcript level"/>
<protein>
    <recommendedName>
        <fullName>Keratin, type II cytoskeletal 74</fullName>
    </recommendedName>
    <alternativeName>
        <fullName>Cytokeratin-74</fullName>
        <shortName>CK-74</shortName>
    </alternativeName>
    <alternativeName>
        <fullName>Keratin-74</fullName>
        <shortName>K74</shortName>
    </alternativeName>
    <alternativeName>
        <fullName>Type II inner root sheath-specific keratin-K6irs4</fullName>
    </alternativeName>
    <alternativeName>
        <fullName>Type-II keratin Kb37</fullName>
    </alternativeName>
</protein>
<comment type="function">
    <text evidence="1">Has a role in hair formation. Specific component of keratin intermediate filaments in the inner root sheath (IRS) of the hair follicle (By similarity).</text>
</comment>
<comment type="subunit">
    <text>Heterotetramer of two type I and two type II keratins.</text>
</comment>
<comment type="miscellaneous">
    <text>There are two types of cytoskeletal and microfibrillar keratin, I (acidic) and II (neutral to basic) (40-55 and 56-70 kDa, respectively).</text>
</comment>
<comment type="similarity">
    <text evidence="2">Belongs to the intermediate filament family.</text>
</comment>
<organism>
    <name type="scientific">Bos taurus</name>
    <name type="common">Bovine</name>
    <dbReference type="NCBI Taxonomy" id="9913"/>
    <lineage>
        <taxon>Eukaryota</taxon>
        <taxon>Metazoa</taxon>
        <taxon>Chordata</taxon>
        <taxon>Craniata</taxon>
        <taxon>Vertebrata</taxon>
        <taxon>Euteleostomi</taxon>
        <taxon>Mammalia</taxon>
        <taxon>Eutheria</taxon>
        <taxon>Laurasiatheria</taxon>
        <taxon>Artiodactyla</taxon>
        <taxon>Ruminantia</taxon>
        <taxon>Pecora</taxon>
        <taxon>Bovidae</taxon>
        <taxon>Bovinae</taxon>
        <taxon>Bos</taxon>
    </lineage>
</organism>
<sequence length="550" mass="59952">MSRQLNIKSGGDKGGFSGHSAVVLRKVGGSAASYRAPSKGAGAAFGSRSLYSLCRGDLCVPLKVAGSSVRTGGYNFRLGSGYGGVRASSFAGSMFGSVVLGPVCPSMCPPGGIHQVTVNKSLLAPLNVELDPEIQKVRAQEREQIMALNNKFASFIDKVRFLEQQNQVLGTKWELLQQMDLNNCRKNLEPILEGYIGNLRKQLEMLSGDRLRLDSELKGMRDLVEDYKKRYEVEINQRTAAENDFVVLKKDADAAYTVKVELQAKVDSLDKDIKFLKCLYDAEVAQIQTHTSETSVILSMDNNRYLDLDSIIAEVRAQYEDIALKSKAEAEALYQSKIQELQLAAGRHGDDLKHTKNEMSELNRLIQRIRCEIANVKKQAFSVCSKPAPCPLQCANLETAIADAEQRGDSALKDARAKLDELEAAMHQAKEELARMLREYQELMSLKLALDMEIATYSKLLEGEECWMSGENPSSVSISVISSSASSFGYHPGSSASTDLGASTMASTGTSSSSSTQSGQTRAKGARVGDPKDSQDKSTPVSSRARKAAR</sequence>
<dbReference type="EMBL" id="BC133518">
    <property type="protein sequence ID" value="AAI33519.1"/>
    <property type="molecule type" value="mRNA"/>
</dbReference>
<dbReference type="RefSeq" id="NP_001076916.1">
    <property type="nucleotide sequence ID" value="NM_001083447.1"/>
</dbReference>
<dbReference type="SMR" id="A3KN27"/>
<dbReference type="FunCoup" id="A3KN27">
    <property type="interactions" value="8"/>
</dbReference>
<dbReference type="STRING" id="9913.ENSBTAP00000038264"/>
<dbReference type="PaxDb" id="9913-ENSBTAP00000038264"/>
<dbReference type="PeptideAtlas" id="A3KN27"/>
<dbReference type="Ensembl" id="ENSBTAT00000038451.4">
    <property type="protein sequence ID" value="ENSBTAP00000038264.3"/>
    <property type="gene ID" value="ENSBTAG00000000619.6"/>
</dbReference>
<dbReference type="GeneID" id="525034"/>
<dbReference type="KEGG" id="bta:525034"/>
<dbReference type="CTD" id="121391"/>
<dbReference type="VEuPathDB" id="HostDB:ENSBTAG00000000619"/>
<dbReference type="VGNC" id="VGNC:30738">
    <property type="gene designation" value="KRT74"/>
</dbReference>
<dbReference type="eggNOG" id="ENOG502RNQG">
    <property type="taxonomic scope" value="Eukaryota"/>
</dbReference>
<dbReference type="GeneTree" id="ENSGT00940000162774"/>
<dbReference type="InParanoid" id="A3KN27"/>
<dbReference type="OMA" id="IQRIRCD"/>
<dbReference type="OrthoDB" id="2441647at2759"/>
<dbReference type="TreeFam" id="TF317854"/>
<dbReference type="Reactome" id="R-BTA-6805567">
    <property type="pathway name" value="Keratinization"/>
</dbReference>
<dbReference type="Reactome" id="R-BTA-6809371">
    <property type="pathway name" value="Formation of the cornified envelope"/>
</dbReference>
<dbReference type="Proteomes" id="UP000009136">
    <property type="component" value="Chromosome 5"/>
</dbReference>
<dbReference type="Bgee" id="ENSBTAG00000000619">
    <property type="expression patterns" value="Expressed in zone of skin and 8 other cell types or tissues"/>
</dbReference>
<dbReference type="GO" id="GO:0005737">
    <property type="term" value="C:cytoplasm"/>
    <property type="evidence" value="ECO:0007669"/>
    <property type="project" value="Ensembl"/>
</dbReference>
<dbReference type="GO" id="GO:0045095">
    <property type="term" value="C:keratin filament"/>
    <property type="evidence" value="ECO:0000318"/>
    <property type="project" value="GO_Central"/>
</dbReference>
<dbReference type="GO" id="GO:1990254">
    <property type="term" value="F:keratin filament binding"/>
    <property type="evidence" value="ECO:0007669"/>
    <property type="project" value="Ensembl"/>
</dbReference>
<dbReference type="GO" id="GO:0030280">
    <property type="term" value="F:structural constituent of skin epidermis"/>
    <property type="evidence" value="ECO:0000318"/>
    <property type="project" value="GO_Central"/>
</dbReference>
<dbReference type="GO" id="GO:0045109">
    <property type="term" value="P:intermediate filament organization"/>
    <property type="evidence" value="ECO:0000318"/>
    <property type="project" value="GO_Central"/>
</dbReference>
<dbReference type="GO" id="GO:0031424">
    <property type="term" value="P:keratinization"/>
    <property type="evidence" value="ECO:0000318"/>
    <property type="project" value="GO_Central"/>
</dbReference>
<dbReference type="FunFam" id="1.20.5.1160:FF:000001">
    <property type="entry name" value="Keratin type II"/>
    <property type="match status" value="1"/>
</dbReference>
<dbReference type="FunFam" id="1.20.5.170:FF:000004">
    <property type="entry name" value="Keratin, type II cytoskeletal 5"/>
    <property type="match status" value="1"/>
</dbReference>
<dbReference type="FunFam" id="1.20.5.500:FF:000001">
    <property type="entry name" value="Type II keratin 23"/>
    <property type="match status" value="1"/>
</dbReference>
<dbReference type="Gene3D" id="1.20.5.170">
    <property type="match status" value="1"/>
</dbReference>
<dbReference type="Gene3D" id="1.20.5.500">
    <property type="entry name" value="Single helix bin"/>
    <property type="match status" value="1"/>
</dbReference>
<dbReference type="Gene3D" id="1.20.5.1160">
    <property type="entry name" value="Vasodilator-stimulated phosphoprotein"/>
    <property type="match status" value="1"/>
</dbReference>
<dbReference type="InterPro" id="IPR039008">
    <property type="entry name" value="IF_rod_dom"/>
</dbReference>
<dbReference type="InterPro" id="IPR032444">
    <property type="entry name" value="Keratin_2_head"/>
</dbReference>
<dbReference type="InterPro" id="IPR003054">
    <property type="entry name" value="Keratin_II"/>
</dbReference>
<dbReference type="PANTHER" id="PTHR45616">
    <property type="entry name" value="GATA-TYPE DOMAIN-CONTAINING PROTEIN"/>
    <property type="match status" value="1"/>
</dbReference>
<dbReference type="PANTHER" id="PTHR45616:SF5">
    <property type="entry name" value="KERATIN, TYPE II CYTOSKELETAL 74"/>
    <property type="match status" value="1"/>
</dbReference>
<dbReference type="Pfam" id="PF00038">
    <property type="entry name" value="Filament"/>
    <property type="match status" value="1"/>
</dbReference>
<dbReference type="Pfam" id="PF16208">
    <property type="entry name" value="Keratin_2_head"/>
    <property type="match status" value="1"/>
</dbReference>
<dbReference type="PRINTS" id="PR01276">
    <property type="entry name" value="TYPE2KERATIN"/>
</dbReference>
<dbReference type="SMART" id="SM01391">
    <property type="entry name" value="Filament"/>
    <property type="match status" value="1"/>
</dbReference>
<dbReference type="SUPFAM" id="SSF64593">
    <property type="entry name" value="Intermediate filament protein, coiled coil region"/>
    <property type="match status" value="3"/>
</dbReference>
<dbReference type="PROSITE" id="PS51842">
    <property type="entry name" value="IF_ROD_2"/>
    <property type="match status" value="1"/>
</dbReference>
<feature type="chain" id="PRO_0000314884" description="Keratin, type II cytoskeletal 74">
    <location>
        <begin position="1"/>
        <end position="550"/>
    </location>
</feature>
<feature type="domain" description="IF rod" evidence="2">
    <location>
        <begin position="141"/>
        <end position="468"/>
    </location>
</feature>
<feature type="region of interest" description="Head">
    <location>
        <begin position="1"/>
        <end position="140"/>
    </location>
</feature>
<feature type="region of interest" description="Coil 1A">
    <location>
        <begin position="141"/>
        <end position="176"/>
    </location>
</feature>
<feature type="region of interest" description="Linker 1">
    <location>
        <begin position="177"/>
        <end position="195"/>
    </location>
</feature>
<feature type="region of interest" description="Coil 1B">
    <location>
        <begin position="196"/>
        <end position="287"/>
    </location>
</feature>
<feature type="region of interest" description="Linker 12">
    <location>
        <begin position="288"/>
        <end position="311"/>
    </location>
</feature>
<feature type="region of interest" description="Coil 2">
    <location>
        <begin position="312"/>
        <end position="464"/>
    </location>
</feature>
<feature type="region of interest" description="Tail">
    <location>
        <begin position="465"/>
        <end position="550"/>
    </location>
</feature>
<feature type="region of interest" description="Disordered" evidence="3">
    <location>
        <begin position="491"/>
        <end position="550"/>
    </location>
</feature>
<feature type="compositionally biased region" description="Low complexity" evidence="3">
    <location>
        <begin position="502"/>
        <end position="521"/>
    </location>
</feature>
<feature type="compositionally biased region" description="Basic and acidic residues" evidence="3">
    <location>
        <begin position="527"/>
        <end position="536"/>
    </location>
</feature>
<feature type="site" description="Stutter">
    <location>
        <position position="406"/>
    </location>
</feature>
<reference key="1">
    <citation type="submission" date="2007-02" db="EMBL/GenBank/DDBJ databases">
        <authorList>
            <consortium name="NIH - Mammalian Gene Collection (MGC) project"/>
        </authorList>
    </citation>
    <scope>NUCLEOTIDE SEQUENCE [LARGE SCALE MRNA]</scope>
    <source>
        <strain>Hereford</strain>
        <tissue>Fetal skin</tissue>
    </source>
</reference>
<accession>A3KN27</accession>
<name>K2C74_BOVIN</name>